<proteinExistence type="inferred from homology"/>
<reference key="1">
    <citation type="journal article" date="2005" name="Nucleic Acids Res.">
        <title>Genome dynamics and diversity of Shigella species, the etiologic agents of bacillary dysentery.</title>
        <authorList>
            <person name="Yang F."/>
            <person name="Yang J."/>
            <person name="Zhang X."/>
            <person name="Chen L."/>
            <person name="Jiang Y."/>
            <person name="Yan Y."/>
            <person name="Tang X."/>
            <person name="Wang J."/>
            <person name="Xiong Z."/>
            <person name="Dong J."/>
            <person name="Xue Y."/>
            <person name="Zhu Y."/>
            <person name="Xu X."/>
            <person name="Sun L."/>
            <person name="Chen S."/>
            <person name="Nie H."/>
            <person name="Peng J."/>
            <person name="Xu J."/>
            <person name="Wang Y."/>
            <person name="Yuan Z."/>
            <person name="Wen Y."/>
            <person name="Yao Z."/>
            <person name="Shen Y."/>
            <person name="Qiang B."/>
            <person name="Hou Y."/>
            <person name="Yu J."/>
            <person name="Jin Q."/>
        </authorList>
    </citation>
    <scope>NUCLEOTIDE SEQUENCE [LARGE SCALE GENOMIC DNA]</scope>
    <source>
        <strain>Ss046</strain>
    </source>
</reference>
<accession>Q3Z5I0</accession>
<gene>
    <name type="primary">skp</name>
    <name type="ordered locus">SSON_0190</name>
</gene>
<dbReference type="EMBL" id="CP000038">
    <property type="protein sequence ID" value="AAZ86982.1"/>
    <property type="molecule type" value="Genomic_DNA"/>
</dbReference>
<dbReference type="RefSeq" id="WP_000758956.1">
    <property type="nucleotide sequence ID" value="NC_007384.1"/>
</dbReference>
<dbReference type="SMR" id="Q3Z5I0"/>
<dbReference type="GeneID" id="93777247"/>
<dbReference type="KEGG" id="ssn:SSON_0190"/>
<dbReference type="HOGENOM" id="CLU_101388_2_0_6"/>
<dbReference type="Proteomes" id="UP000002529">
    <property type="component" value="Chromosome"/>
</dbReference>
<dbReference type="GO" id="GO:0005829">
    <property type="term" value="C:cytosol"/>
    <property type="evidence" value="ECO:0007669"/>
    <property type="project" value="TreeGrafter"/>
</dbReference>
<dbReference type="GO" id="GO:0042597">
    <property type="term" value="C:periplasmic space"/>
    <property type="evidence" value="ECO:0007669"/>
    <property type="project" value="UniProtKB-SubCell"/>
</dbReference>
<dbReference type="GO" id="GO:0051082">
    <property type="term" value="F:unfolded protein binding"/>
    <property type="evidence" value="ECO:0007669"/>
    <property type="project" value="InterPro"/>
</dbReference>
<dbReference type="GO" id="GO:0061077">
    <property type="term" value="P:chaperone-mediated protein folding"/>
    <property type="evidence" value="ECO:0007669"/>
    <property type="project" value="TreeGrafter"/>
</dbReference>
<dbReference type="GO" id="GO:0050821">
    <property type="term" value="P:protein stabilization"/>
    <property type="evidence" value="ECO:0007669"/>
    <property type="project" value="TreeGrafter"/>
</dbReference>
<dbReference type="FunFam" id="3.30.910.20:FF:000001">
    <property type="entry name" value="Molecular chaperone Skp"/>
    <property type="match status" value="1"/>
</dbReference>
<dbReference type="Gene3D" id="3.30.910.20">
    <property type="entry name" value="Skp domain"/>
    <property type="match status" value="1"/>
</dbReference>
<dbReference type="InterPro" id="IPR005632">
    <property type="entry name" value="Chaperone_Skp"/>
</dbReference>
<dbReference type="InterPro" id="IPR024930">
    <property type="entry name" value="Skp_dom_sf"/>
</dbReference>
<dbReference type="NCBIfam" id="NF008047">
    <property type="entry name" value="PRK10780.1"/>
    <property type="match status" value="1"/>
</dbReference>
<dbReference type="PANTHER" id="PTHR35089">
    <property type="entry name" value="CHAPERONE PROTEIN SKP"/>
    <property type="match status" value="1"/>
</dbReference>
<dbReference type="PANTHER" id="PTHR35089:SF1">
    <property type="entry name" value="CHAPERONE PROTEIN SKP"/>
    <property type="match status" value="1"/>
</dbReference>
<dbReference type="Pfam" id="PF03938">
    <property type="entry name" value="OmpH"/>
    <property type="match status" value="1"/>
</dbReference>
<dbReference type="PIRSF" id="PIRSF002094">
    <property type="entry name" value="OMP26_Skp"/>
    <property type="match status" value="1"/>
</dbReference>
<dbReference type="SMART" id="SM00935">
    <property type="entry name" value="OmpH"/>
    <property type="match status" value="1"/>
</dbReference>
<dbReference type="SUPFAM" id="SSF111384">
    <property type="entry name" value="OmpH-like"/>
    <property type="match status" value="1"/>
</dbReference>
<evidence type="ECO:0000250" key="1"/>
<evidence type="ECO:0000255" key="2"/>
<evidence type="ECO:0000305" key="3"/>
<organism>
    <name type="scientific">Shigella sonnei (strain Ss046)</name>
    <dbReference type="NCBI Taxonomy" id="300269"/>
    <lineage>
        <taxon>Bacteria</taxon>
        <taxon>Pseudomonadati</taxon>
        <taxon>Pseudomonadota</taxon>
        <taxon>Gammaproteobacteria</taxon>
        <taxon>Enterobacterales</taxon>
        <taxon>Enterobacteriaceae</taxon>
        <taxon>Shigella</taxon>
    </lineage>
</organism>
<keyword id="KW-0143">Chaperone</keyword>
<keyword id="KW-0574">Periplasm</keyword>
<keyword id="KW-1185">Reference proteome</keyword>
<keyword id="KW-0732">Signal</keyword>
<sequence length="161" mass="17688">MKKWLLAAGLGLALATSAQAADKIAIVNMGSLFQQVAQKTGVSNTLENEFKGRASELQRMETDLQAKMKKLQSMKAGSDRTKLEKDVMAQRQTFAQKAQAFEQDRARRSNEERGKLVTRIQTAVKSVANSQDIDLVVDANAVAYNSSDVKDITADVLKQVK</sequence>
<comment type="function">
    <text evidence="1">Molecular chaperone that interacts specifically with outer membrane proteins, thus maintaining the solubility of early folding intermediates during passage through the periplasm.</text>
</comment>
<comment type="subunit">
    <text evidence="1">Homotrimer.</text>
</comment>
<comment type="subcellular location">
    <subcellularLocation>
        <location evidence="1">Periplasm</location>
    </subcellularLocation>
</comment>
<comment type="similarity">
    <text evidence="3">Belongs to the Skp family.</text>
</comment>
<feature type="signal peptide" evidence="1">
    <location>
        <begin position="1"/>
        <end position="20"/>
    </location>
</feature>
<feature type="chain" id="PRO_0000227895" description="Chaperone protein Skp">
    <location>
        <begin position="21"/>
        <end position="161"/>
    </location>
</feature>
<feature type="region of interest" description="Lipopolysaccharide binding" evidence="2">
    <location>
        <begin position="97"/>
        <end position="108"/>
    </location>
</feature>
<protein>
    <recommendedName>
        <fullName>Chaperone protein Skp</fullName>
    </recommendedName>
</protein>
<name>SKP_SHISS</name>